<keyword id="KW-0167">Capsid protein</keyword>
<keyword id="KW-0426">Late protein</keyword>
<keyword id="KW-1185">Reference proteome</keyword>
<keyword id="KW-0118">Viral capsid assembly</keyword>
<keyword id="KW-1171">Viral genome ejection through host cell envelope</keyword>
<keyword id="KW-0231">Viral genome packaging</keyword>
<keyword id="KW-1162">Viral penetration into host cytoplasm</keyword>
<keyword id="KW-1188">Viral release from host cell</keyword>
<keyword id="KW-1244">Viral short tail ejection system</keyword>
<keyword id="KW-0946">Virion</keyword>
<keyword id="KW-1160">Virus entry into host cell</keyword>
<protein>
    <recommendedName>
        <fullName>Portal protein</fullName>
    </recommendedName>
    <alternativeName>
        <fullName evidence="2">Gene product 19</fullName>
        <shortName>Gp19</shortName>
    </alternativeName>
    <alternativeName>
        <fullName>Head-to-tail connector</fullName>
    </alternativeName>
</protein>
<feature type="chain" id="PRO_0000077748" description="Portal protein">
    <location>
        <begin position="1"/>
        <end position="720"/>
    </location>
</feature>
<reference key="1">
    <citation type="journal article" date="1999" name="Virology">
        <title>Isolation and characterization of APSE-1, a bacteriophage infecting the secondary endosymbiont of acyrthosiphon pisum.</title>
        <authorList>
            <person name="van der Wilk F."/>
            <person name="Dullemans A.M."/>
            <person name="Verbeek M."/>
            <person name="van den Heuvel J.F.J.M."/>
        </authorList>
    </citation>
    <scope>NUCLEOTIDE SEQUENCE [LARGE SCALE GENOMIC DNA]</scope>
</reference>
<name>PORTL_BPAPS</name>
<proteinExistence type="inferred from homology"/>
<accession>Q9T1S9</accession>
<gene>
    <name type="primary">19</name>
</gene>
<sequence length="720" mass="80934">MAETLQKRHEQIMRKFDRAHSPQEAVREKCLEATRFARVPGGQWEGATAAGSELGKHFEKYPKFEINKISTELNRIISEYRHNRITVKFRPGDKTASEALANKLNGLFRADYEETDGGEACDNAFDDGSTGGFGCFRLTTNLVNALDPMDERQRICLEPIYDPARSVWFDPDAKKYDKSDAEWAFCMYSLSAEKYKAEYNKDPATLMSGIERSWDYDWYDVDVVYIAKYYEVKKESVDVVSFQNPLTSETVTYDSDQLELVEDELADIGFIEAARRTIKRRRVYVSVVDGEGFLEKAQRIPGEHIPLIPVYGKRWFIDDIERVEGHIAKAMDAQRLYNLQVSMLADSATQDTGSIPIVGKSQIKTLEKYWANRNKNRPAFLPLNEIVDKQGNIIAPPTPVGYTQPQPLNQAMAALLQQTGADIQEVTGSSQAMQPMPSNIAKETVNHLMHRSDMSSFIYLDNMAKSLKRAGEVWLSMAREVYGSDRQVRIVNADGTDDIALMSVVINDNQTGQVVAMNDLSSGRYDVTVDVGPSYTARRDATVSVLTNLLAGMLPQDPMRQVLQGIILDNMEGEGLDEFKEYNRKQLLTQGVVKPRNTEEEQMVAQMIQQAQQPNAELVAAQGVLMQGQAEVQKAKNEELAIQVKAFQAQTEARVAEAKMVQILASADSAKRAEIREALKMLHQFQKEQGDASRADAELILKATDTQHKQNRDAAKNHSI</sequence>
<dbReference type="EMBL" id="AF157835">
    <property type="protein sequence ID" value="AAF03962.1"/>
    <property type="molecule type" value="Genomic_DNA"/>
</dbReference>
<dbReference type="RefSeq" id="NP_050980.1">
    <property type="nucleotide sequence ID" value="NC_000935.1"/>
</dbReference>
<dbReference type="SMR" id="Q9T1S9"/>
<dbReference type="KEGG" id="vg:1262313"/>
<dbReference type="Proteomes" id="UP000000853">
    <property type="component" value="Genome"/>
</dbReference>
<dbReference type="GO" id="GO:0019028">
    <property type="term" value="C:viral capsid"/>
    <property type="evidence" value="ECO:0007669"/>
    <property type="project" value="UniProtKB-KW"/>
</dbReference>
<dbReference type="GO" id="GO:0099002">
    <property type="term" value="P:symbiont genome ejection through host cell envelope, short tail mechanism"/>
    <property type="evidence" value="ECO:0007669"/>
    <property type="project" value="UniProtKB-KW"/>
</dbReference>
<dbReference type="Gene3D" id="6.10.280.90">
    <property type="match status" value="1"/>
</dbReference>
<dbReference type="InterPro" id="IPR032427">
    <property type="entry name" value="P22_portal"/>
</dbReference>
<dbReference type="Pfam" id="PF16510">
    <property type="entry name" value="P22_portal"/>
    <property type="match status" value="1"/>
</dbReference>
<comment type="function">
    <text evidence="1">Forms the portal vertex of the capsid. This portal plays critical roles in head assembly, genome packaging, neck/tail attachment, and genome ejection. Procapsid assembly may initiate with a nucleation complex composed of portal and scaffolding proteins (By similarity). The portal protein multimerizes as a single ring-shaped homododecamer arranged around a central channel.</text>
</comment>
<comment type="subunit">
    <text evidence="1">Homododecamer.</text>
</comment>
<comment type="subcellular location">
    <subcellularLocation>
        <location evidence="1">Virion</location>
    </subcellularLocation>
</comment>
<comment type="similarity">
    <text evidence="2">Belongs to the p22likevirus portal protein family.</text>
</comment>
<organism>
    <name type="scientific">Acyrthosiphon pisum secondary endosymbiont phage 1</name>
    <name type="common">Bacteriophage APSE-1</name>
    <dbReference type="NCBI Taxonomy" id="2682836"/>
    <lineage>
        <taxon>Viruses</taxon>
        <taxon>Duplodnaviria</taxon>
        <taxon>Heunggongvirae</taxon>
        <taxon>Uroviricota</taxon>
        <taxon>Caudoviricetes</taxon>
        <taxon>Sendosyvirus</taxon>
        <taxon>Sendosyvirus APSE1</taxon>
    </lineage>
</organism>
<evidence type="ECO:0000250" key="1">
    <source>
        <dbReference type="UniProtKB" id="P26744"/>
    </source>
</evidence>
<evidence type="ECO:0000305" key="2"/>
<organismHost>
    <name type="scientific">Escherichia coli</name>
    <dbReference type="NCBI Taxonomy" id="562"/>
</organismHost>